<protein>
    <recommendedName>
        <fullName evidence="1">Small ribosomal subunit biogenesis GTPase RsgA</fullName>
        <ecNumber evidence="1">3.6.1.-</ecNumber>
    </recommendedName>
</protein>
<dbReference type="EC" id="3.6.1.-" evidence="1"/>
<dbReference type="EMBL" id="CP001277">
    <property type="protein sequence ID" value="ACQ67231.1"/>
    <property type="molecule type" value="Genomic_DNA"/>
</dbReference>
<dbReference type="RefSeq" id="WP_012738188.1">
    <property type="nucleotide sequence ID" value="NC_012751.1"/>
</dbReference>
<dbReference type="SMR" id="C4K3T8"/>
<dbReference type="STRING" id="572265.HDEF_0477"/>
<dbReference type="GeneID" id="66260368"/>
<dbReference type="KEGG" id="hde:HDEF_0477"/>
<dbReference type="eggNOG" id="COG1162">
    <property type="taxonomic scope" value="Bacteria"/>
</dbReference>
<dbReference type="HOGENOM" id="CLU_033617_2_0_6"/>
<dbReference type="Proteomes" id="UP000002334">
    <property type="component" value="Chromosome"/>
</dbReference>
<dbReference type="GO" id="GO:0005737">
    <property type="term" value="C:cytoplasm"/>
    <property type="evidence" value="ECO:0007669"/>
    <property type="project" value="UniProtKB-SubCell"/>
</dbReference>
<dbReference type="GO" id="GO:0005525">
    <property type="term" value="F:GTP binding"/>
    <property type="evidence" value="ECO:0007669"/>
    <property type="project" value="UniProtKB-UniRule"/>
</dbReference>
<dbReference type="GO" id="GO:0003924">
    <property type="term" value="F:GTPase activity"/>
    <property type="evidence" value="ECO:0007669"/>
    <property type="project" value="UniProtKB-UniRule"/>
</dbReference>
<dbReference type="GO" id="GO:0046872">
    <property type="term" value="F:metal ion binding"/>
    <property type="evidence" value="ECO:0007669"/>
    <property type="project" value="UniProtKB-KW"/>
</dbReference>
<dbReference type="GO" id="GO:0019843">
    <property type="term" value="F:rRNA binding"/>
    <property type="evidence" value="ECO:0007669"/>
    <property type="project" value="UniProtKB-KW"/>
</dbReference>
<dbReference type="GO" id="GO:0042274">
    <property type="term" value="P:ribosomal small subunit biogenesis"/>
    <property type="evidence" value="ECO:0007669"/>
    <property type="project" value="UniProtKB-UniRule"/>
</dbReference>
<dbReference type="CDD" id="cd01854">
    <property type="entry name" value="YjeQ_EngC"/>
    <property type="match status" value="1"/>
</dbReference>
<dbReference type="Gene3D" id="2.40.50.140">
    <property type="entry name" value="Nucleic acid-binding proteins"/>
    <property type="match status" value="1"/>
</dbReference>
<dbReference type="Gene3D" id="3.40.50.300">
    <property type="entry name" value="P-loop containing nucleotide triphosphate hydrolases"/>
    <property type="match status" value="1"/>
</dbReference>
<dbReference type="Gene3D" id="1.10.40.50">
    <property type="entry name" value="Probable gtpase engc, domain 3"/>
    <property type="match status" value="1"/>
</dbReference>
<dbReference type="HAMAP" id="MF_01820">
    <property type="entry name" value="GTPase_RsgA"/>
    <property type="match status" value="1"/>
</dbReference>
<dbReference type="InterPro" id="IPR030378">
    <property type="entry name" value="G_CP_dom"/>
</dbReference>
<dbReference type="InterPro" id="IPR012340">
    <property type="entry name" value="NA-bd_OB-fold"/>
</dbReference>
<dbReference type="InterPro" id="IPR027417">
    <property type="entry name" value="P-loop_NTPase"/>
</dbReference>
<dbReference type="InterPro" id="IPR004881">
    <property type="entry name" value="Ribosome_biogen_GTPase_RsgA"/>
</dbReference>
<dbReference type="InterPro" id="IPR010914">
    <property type="entry name" value="RsgA_GTPase_dom"/>
</dbReference>
<dbReference type="NCBIfam" id="NF008931">
    <property type="entry name" value="PRK12288.1"/>
    <property type="match status" value="1"/>
</dbReference>
<dbReference type="NCBIfam" id="TIGR00157">
    <property type="entry name" value="ribosome small subunit-dependent GTPase A"/>
    <property type="match status" value="1"/>
</dbReference>
<dbReference type="PANTHER" id="PTHR32120">
    <property type="entry name" value="SMALL RIBOSOMAL SUBUNIT BIOGENESIS GTPASE RSGA"/>
    <property type="match status" value="1"/>
</dbReference>
<dbReference type="PANTHER" id="PTHR32120:SF11">
    <property type="entry name" value="SMALL RIBOSOMAL SUBUNIT BIOGENESIS GTPASE RSGA 1, MITOCHONDRIAL-RELATED"/>
    <property type="match status" value="1"/>
</dbReference>
<dbReference type="Pfam" id="PF03193">
    <property type="entry name" value="RsgA_GTPase"/>
    <property type="match status" value="1"/>
</dbReference>
<dbReference type="SUPFAM" id="SSF52540">
    <property type="entry name" value="P-loop containing nucleoside triphosphate hydrolases"/>
    <property type="match status" value="1"/>
</dbReference>
<dbReference type="PROSITE" id="PS50936">
    <property type="entry name" value="ENGC_GTPASE"/>
    <property type="match status" value="1"/>
</dbReference>
<dbReference type="PROSITE" id="PS51721">
    <property type="entry name" value="G_CP"/>
    <property type="match status" value="1"/>
</dbReference>
<keyword id="KW-0963">Cytoplasm</keyword>
<keyword id="KW-0342">GTP-binding</keyword>
<keyword id="KW-0378">Hydrolase</keyword>
<keyword id="KW-0479">Metal-binding</keyword>
<keyword id="KW-0547">Nucleotide-binding</keyword>
<keyword id="KW-0690">Ribosome biogenesis</keyword>
<keyword id="KW-0694">RNA-binding</keyword>
<keyword id="KW-0699">rRNA-binding</keyword>
<keyword id="KW-0862">Zinc</keyword>
<evidence type="ECO:0000255" key="1">
    <source>
        <dbReference type="HAMAP-Rule" id="MF_01820"/>
    </source>
</evidence>
<evidence type="ECO:0000255" key="2">
    <source>
        <dbReference type="PROSITE-ProRule" id="PRU01058"/>
    </source>
</evidence>
<evidence type="ECO:0000256" key="3">
    <source>
        <dbReference type="SAM" id="MobiDB-lite"/>
    </source>
</evidence>
<gene>
    <name evidence="1" type="primary">rsgA</name>
    <name type="ordered locus">HDEF_0477</name>
</gene>
<comment type="function">
    <text evidence="1">One of several proteins that assist in the late maturation steps of the functional core of the 30S ribosomal subunit. Helps release RbfA from mature subunits. May play a role in the assembly of ribosomal proteins into the subunit. Circularly permuted GTPase that catalyzes slow GTP hydrolysis, GTPase activity is stimulated by the 30S ribosomal subunit.</text>
</comment>
<comment type="cofactor">
    <cofactor evidence="1">
        <name>Zn(2+)</name>
        <dbReference type="ChEBI" id="CHEBI:29105"/>
    </cofactor>
    <text evidence="1">Binds 1 zinc ion per subunit.</text>
</comment>
<comment type="subunit">
    <text evidence="1">Monomer. Associates with 30S ribosomal subunit, binds 16S rRNA.</text>
</comment>
<comment type="subcellular location">
    <subcellularLocation>
        <location evidence="1">Cytoplasm</location>
    </subcellularLocation>
</comment>
<comment type="similarity">
    <text evidence="1">Belongs to the TRAFAC class YlqF/YawG GTPase family. RsgA subfamily.</text>
</comment>
<accession>C4K3T8</accession>
<proteinExistence type="inferred from homology"/>
<name>RSGA_HAMD5</name>
<feature type="chain" id="PRO_1000216043" description="Small ribosomal subunit biogenesis GTPase RsgA">
    <location>
        <begin position="1"/>
        <end position="352"/>
    </location>
</feature>
<feature type="domain" description="CP-type G" evidence="2">
    <location>
        <begin position="116"/>
        <end position="278"/>
    </location>
</feature>
<feature type="region of interest" description="Disordered" evidence="3">
    <location>
        <begin position="1"/>
        <end position="38"/>
    </location>
</feature>
<feature type="compositionally biased region" description="Basic residues" evidence="3">
    <location>
        <begin position="1"/>
        <end position="21"/>
    </location>
</feature>
<feature type="binding site" evidence="1">
    <location>
        <begin position="164"/>
        <end position="167"/>
    </location>
    <ligand>
        <name>GTP</name>
        <dbReference type="ChEBI" id="CHEBI:37565"/>
    </ligand>
</feature>
<feature type="binding site" evidence="1">
    <location>
        <begin position="218"/>
        <end position="226"/>
    </location>
    <ligand>
        <name>GTP</name>
        <dbReference type="ChEBI" id="CHEBI:37565"/>
    </ligand>
</feature>
<feature type="binding site" evidence="1">
    <location>
        <position position="302"/>
    </location>
    <ligand>
        <name>Zn(2+)</name>
        <dbReference type="ChEBI" id="CHEBI:29105"/>
    </ligand>
</feature>
<feature type="binding site" evidence="1">
    <location>
        <position position="307"/>
    </location>
    <ligand>
        <name>Zn(2+)</name>
        <dbReference type="ChEBI" id="CHEBI:29105"/>
    </ligand>
</feature>
<feature type="binding site" evidence="1">
    <location>
        <position position="309"/>
    </location>
    <ligand>
        <name>Zn(2+)</name>
        <dbReference type="ChEBI" id="CHEBI:29105"/>
    </ligand>
</feature>
<feature type="binding site" evidence="1">
    <location>
        <position position="315"/>
    </location>
    <ligand>
        <name>Zn(2+)</name>
        <dbReference type="ChEBI" id="CHEBI:29105"/>
    </ligand>
</feature>
<sequence>MKKNKLSKNQHRRIQAHHQYRLHPTSLTDDKNNQLDDAQFGEPQQGVVISRFGQHADVEGHQGQQQRCHIRRNVLSLVTGDRVIWRPGIPRQENRNVKGIVEAVHERKSVLTRPDFYDGIKPMAANIDQIVIVSAVIPDLSLNMIDRYLVVSESLNIKPLLLLNKIDLLTPNERKKINLRLNIYRNIHYTVLEVSAQTGEGIADLQANLLDRVSIFSGQSGVGKSSLLNTLLPPTEQQILVEALSEKSALGQHTTTTSRLYHFQQGGDLIDSPGIREFGLWHLTQEQIIQGFIEFRDYVGHCKFRDCAHIDDPCCALRDAVQKGHIAKERFDNYHQILSEITLKGKKLFNQD</sequence>
<organism>
    <name type="scientific">Hamiltonella defensa subsp. Acyrthosiphon pisum (strain 5AT)</name>
    <dbReference type="NCBI Taxonomy" id="572265"/>
    <lineage>
        <taxon>Bacteria</taxon>
        <taxon>Pseudomonadati</taxon>
        <taxon>Pseudomonadota</taxon>
        <taxon>Gammaproteobacteria</taxon>
        <taxon>Enterobacterales</taxon>
        <taxon>Enterobacteriaceae</taxon>
        <taxon>aphid secondary symbionts</taxon>
        <taxon>Candidatus Hamiltonella</taxon>
    </lineage>
</organism>
<reference key="1">
    <citation type="journal article" date="2009" name="Proc. Natl. Acad. Sci. U.S.A.">
        <title>Hamiltonella defensa, genome evolution of protective bacterial endosymbiont from pathogenic ancestors.</title>
        <authorList>
            <person name="Degnan P.H."/>
            <person name="Yu Y."/>
            <person name="Sisneros N."/>
            <person name="Wing R.A."/>
            <person name="Moran N.A."/>
        </authorList>
    </citation>
    <scope>NUCLEOTIDE SEQUENCE [LARGE SCALE GENOMIC DNA]</scope>
    <source>
        <strain>5AT</strain>
    </source>
</reference>